<feature type="chain" id="PRO_0000309337" description="Pleckstrin homology domain-containing family M member 1">
    <location>
        <begin position="1"/>
        <end position="1059"/>
    </location>
</feature>
<feature type="domain" description="RUN" evidence="4">
    <location>
        <begin position="40"/>
        <end position="182"/>
    </location>
</feature>
<feature type="domain" description="PH 1" evidence="3">
    <location>
        <begin position="536"/>
        <end position="627"/>
    </location>
</feature>
<feature type="domain" description="PH 2" evidence="3">
    <location>
        <begin position="686"/>
        <end position="780"/>
    </location>
</feature>
<feature type="zinc finger region" description="Phorbol-ester/DAG-type" evidence="5">
    <location>
        <begin position="989"/>
        <end position="1043"/>
    </location>
</feature>
<feature type="region of interest" description="Disordered" evidence="6">
    <location>
        <begin position="218"/>
        <end position="244"/>
    </location>
</feature>
<feature type="region of interest" description="Disordered" evidence="6">
    <location>
        <begin position="272"/>
        <end position="334"/>
    </location>
</feature>
<feature type="region of interest" description="Disordered" evidence="6">
    <location>
        <begin position="354"/>
        <end position="411"/>
    </location>
</feature>
<feature type="region of interest" description="Interaction with RAB7A" evidence="2">
    <location>
        <begin position="657"/>
        <end position="1059"/>
    </location>
</feature>
<feature type="short sequence motif" description="LIR" evidence="2">
    <location>
        <begin position="634"/>
        <end position="640"/>
    </location>
</feature>
<feature type="compositionally biased region" description="Polar residues" evidence="6">
    <location>
        <begin position="313"/>
        <end position="334"/>
    </location>
</feature>
<feature type="compositionally biased region" description="Polar residues" evidence="6">
    <location>
        <begin position="392"/>
        <end position="401"/>
    </location>
</feature>
<feature type="modified residue" description="Phosphoserine" evidence="1">
    <location>
        <position position="218"/>
    </location>
</feature>
<feature type="modified residue" description="Phosphoserine" evidence="2">
    <location>
        <position position="430"/>
    </location>
</feature>
<feature type="modified residue" description="Phosphoserine" evidence="10">
    <location>
        <position position="433"/>
    </location>
</feature>
<feature type="modified residue" description="Phosphoserine" evidence="1">
    <location>
        <position position="488"/>
    </location>
</feature>
<protein>
    <recommendedName>
        <fullName evidence="8">Pleckstrin homology domain-containing family M member 1</fullName>
        <shortName>PH domain-containing family M member 1</shortName>
    </recommendedName>
</protein>
<reference key="1">
    <citation type="journal article" date="2004" name="Genome Res.">
        <title>The status, quality, and expansion of the NIH full-length cDNA project: the Mammalian Gene Collection (MGC).</title>
        <authorList>
            <consortium name="The MGC Project Team"/>
        </authorList>
    </citation>
    <scope>NUCLEOTIDE SEQUENCE [LARGE SCALE MRNA]</scope>
    <source>
        <tissue>Lung</tissue>
    </source>
</reference>
<reference key="2">
    <citation type="journal article" date="2007" name="J. Clin. Invest.">
        <title>Involvement of PLEKHM1 in osteoclastic vesicular transport and osteopetrosis in incisors absent rats and humans.</title>
        <authorList>
            <person name="van Wesenbeeck L."/>
            <person name="Odgren P.R."/>
            <person name="Coxon F.P."/>
            <person name="Frattini A."/>
            <person name="Moens P."/>
            <person name="Perdu B."/>
            <person name="MacKay C.A."/>
            <person name="Van Hul E."/>
            <person name="Timmermanns J.-P."/>
            <person name="Vanhoenacker F."/>
            <person name="Jacobs R."/>
            <person name="Peruzzi B."/>
            <person name="Teti A."/>
            <person name="Helfrich M.H."/>
            <person name="Rogers M.J."/>
            <person name="Villa A."/>
            <person name="Van Hul W."/>
        </authorList>
    </citation>
    <scope>FUNCTION</scope>
    <scope>TISSUE SPECIFICITY</scope>
</reference>
<reference key="3">
    <citation type="journal article" date="2012" name="Nat. Commun.">
        <title>Quantitative maps of protein phosphorylation sites across 14 different rat organs and tissues.</title>
        <authorList>
            <person name="Lundby A."/>
            <person name="Secher A."/>
            <person name="Lage K."/>
            <person name="Nordsborg N.B."/>
            <person name="Dmytriyev A."/>
            <person name="Lundby C."/>
            <person name="Olsen J.V."/>
        </authorList>
    </citation>
    <scope>PHOSPHORYLATION [LARGE SCALE ANALYSIS] AT SER-433</scope>
    <scope>IDENTIFICATION BY MASS SPECTROMETRY [LARGE SCALE ANALYSIS]</scope>
</reference>
<evidence type="ECO:0000250" key="1">
    <source>
        <dbReference type="UniProtKB" id="Q7TSI1"/>
    </source>
</evidence>
<evidence type="ECO:0000250" key="2">
    <source>
        <dbReference type="UniProtKB" id="Q9Y4G2"/>
    </source>
</evidence>
<evidence type="ECO:0000255" key="3">
    <source>
        <dbReference type="PROSITE-ProRule" id="PRU00145"/>
    </source>
</evidence>
<evidence type="ECO:0000255" key="4">
    <source>
        <dbReference type="PROSITE-ProRule" id="PRU00178"/>
    </source>
</evidence>
<evidence type="ECO:0000255" key="5">
    <source>
        <dbReference type="PROSITE-ProRule" id="PRU00226"/>
    </source>
</evidence>
<evidence type="ECO:0000256" key="6">
    <source>
        <dbReference type="SAM" id="MobiDB-lite"/>
    </source>
</evidence>
<evidence type="ECO:0000269" key="7">
    <source>
    </source>
</evidence>
<evidence type="ECO:0000305" key="8"/>
<evidence type="ECO:0000312" key="9">
    <source>
        <dbReference type="RGD" id="1308010"/>
    </source>
</evidence>
<evidence type="ECO:0007744" key="10">
    <source>
    </source>
</evidence>
<sequence length="1059" mass="117508">MLSVENGLDPRAAIQVIKKKLVGSVKALQKQHVSLDTVVTSEDGDANTMCSALEAVFIHGLHAKYIRAEAGGKRKKHTHQKPLPQPVFWPLLKAVTHKHIISDLEHLVFINTDVGRCRAWLRLALNDGLMECYLKLLLQEPARLCEYYQPTALLRDAEEAEFLLSFLQGLTSLSFELSYKSAILNEWTLTPLSLSGLCPLSELDPLTVSGAELQRKESLDSISHSSGSEDIEVQHSGHKIRRDRKLTASSLSLDTASSSQLSCSLNSDSCLLQENGPKSPDHSEEPMSYDSDLGTANADDSDRSLQEVLSEFSKAQVNSAPSSGPSQESDTPMFQTPLSLHSLANSTHLLFEGSEEPFPAHTSSGTSSGHKHQPQESPDMQPLGTAQAGPAGSTSDQQPSSPVAGAADQGSEPWKALEYGRVGPKLVVSSPTSPKGKSWISEDDFCRPPKEHALKNTSDLCISPLQGTPELRTALHGPFSQGPRKSCSLGALDKACVSSLDYRNAQTAPSPAVTQDHKNFCVVHRRQMGLSNPFRGLMKLGTVARRGAMGIWKEFFCELSPLELRLYLSDEERTCVESCSLLRCEAVGPAHSDGRFELVFSGKKLALRASSQDEAEDWLDRVREALQKVRPQQEEEWVNIQYPDQAEDSPEAPPDNLPPYSALLPEHAGAQGIQPNWTSAQVPEPDAIKESLLYLYADRTWIPYIFSLSLESLKCFRVRNNEKMLSDSHGVETIRDILPDTSLGGPAFFKIITAKAVLKLQAKNTEEAAHWRDLVRKVLASYLESVQEAVTLAGSLDENCQEVLKFATRENGFLLQYLVAIPTEKGLDSQGCFCAGCSRQIGFSFVRPKLCAFSGLYYCDFCHQDDASVIPARIIHNWDLTKRPVCRQALKFLAQIRAQPLINLQLVNASLYEHVERMHLIGRSREQLKLLGDYLGLCRSGALKELSKRLSHRNYLLESPHKFSVADLQQIAEGVYEGFLKALIEFASQHVYHCDLCTQRGFICQICHHQDIIFPFEFDTTVRCAECRTVFHQSCQAVVRKGCPRCARRRKYQEQNTVS</sequence>
<gene>
    <name evidence="9" type="primary">Plekhm1</name>
</gene>
<name>PKHM1_RAT</name>
<comment type="function">
    <text evidence="1 2 7">Acts as a multivalent adapter protein that regulates Rab7-dependent and HOPS complex-dependent fusion events in the endolysosomal system and couples autophagic and the endocytic trafficking pathways. Acts as a dual effector of RAB7A and ARL8B that simultaneously binds these GTPases, bringing about clustering and fusion of late endosomes and lysosomes. Required for late stages of endolysosomal maturation, facilitating both endocytosis-mediated degradation of growth factor receptors and autophagosome clearance. Interaction with Arl8b is a crucial factor in the terminal maturation of autophagosomes and to mediate autophagosome-lysosome fusion (By similarity). Positively regulates lysosome peripheral distribution and ruffled border formation in osteoclasts (PubMed:17404618). May be involved in negative regulation of endocytic transport from early endosome to late endosome/lysosome implicating its association with Rab7. May have a role in sialyl-lex-mediated transduction of apoptotic signals (By similarity). Involved in bone resorption (By similarity).</text>
</comment>
<comment type="subunit">
    <text evidence="1 2">Interacts (via N- and C-terminus) with RAB7A (GTP-bound form). Simultaneously interacts with RAB7A and ARL8B; bringing about clustering and fusion of late endosomes and lysosomes. Interacts (via RUN domain) with ARL8B (GTP-bound form); the interaction is required for PLEKHM1 localization to lysosomes and for ARL8B function in delivery and degradation of endocytic and autophagic cargo in lysosomes. PLEKHM1 and PLEKHM2 compete for interaction with ARL8B. Interacts with ARL8A; the interaction is weaker than with ARL8B. Interacts with VPS41, VPS11, VPS18, VPS33A and VPS39; indicative for an association with the HOPS complex; the interactions with, at least, VPS41, VPS11, VPS18 and VPS33A require ARL8B (By similarity). Interacts with GABARAP, GABARAPL, GABARAPL2, MAP1LC3A, MAP1LC3B and MAP1LC3C (By similarity). Interacts with PAFAH1B (By similarity). Interacts (via N- and C-terminus) with NDEL1 (By similarity). Interacts (via C-terminus) with MAP3K7 (By similarity). Interacts (via N- and C-terminus) with FAM98A (By similarity). Interacts (via C-terminus) with DEF8; this interaction is weak but increased in a RAB7A-dependent manner (By similarity). May interact with sialyl-lex-positive protein (By similarity).</text>
</comment>
<comment type="subcellular location">
    <subcellularLocation>
        <location evidence="2">Autolysosome membrane</location>
    </subcellularLocation>
    <subcellularLocation>
        <location evidence="2">Endosome membrane</location>
    </subcellularLocation>
    <subcellularLocation>
        <location evidence="2">Late endosome membrane</location>
    </subcellularLocation>
    <subcellularLocation>
        <location evidence="2">Lysosome membrane</location>
    </subcellularLocation>
    <text evidence="2">In case of infection colocalizes with Salmonella typhimurium sifA in proximity of Salmonella-containing vacuole (SCV).</text>
</comment>
<comment type="tissue specificity">
    <text evidence="7">Expressed in testis, skeletal muscle, lung, liver, spleen, brain, heart, kidney and bone. Weakly expressed in monocytes (at protein level).</text>
</comment>
<comment type="domain">
    <text evidence="2">The LIR (LC3-interacting region) motif mediates the interaction with ATG8 family proteins GABARAP, GABARAPL, GABARAPL2, and LC3A/B/C.</text>
</comment>
<comment type="miscellaneous">
    <text>Sialyl-lex is a carcinoma associated antigen.</text>
</comment>
<accession>Q5PQS0</accession>
<organism>
    <name type="scientific">Rattus norvegicus</name>
    <name type="common">Rat</name>
    <dbReference type="NCBI Taxonomy" id="10116"/>
    <lineage>
        <taxon>Eukaryota</taxon>
        <taxon>Metazoa</taxon>
        <taxon>Chordata</taxon>
        <taxon>Craniata</taxon>
        <taxon>Vertebrata</taxon>
        <taxon>Euteleostomi</taxon>
        <taxon>Mammalia</taxon>
        <taxon>Eutheria</taxon>
        <taxon>Euarchontoglires</taxon>
        <taxon>Glires</taxon>
        <taxon>Rodentia</taxon>
        <taxon>Myomorpha</taxon>
        <taxon>Muroidea</taxon>
        <taxon>Muridae</taxon>
        <taxon>Murinae</taxon>
        <taxon>Rattus</taxon>
    </lineage>
</organism>
<proteinExistence type="evidence at protein level"/>
<keyword id="KW-0072">Autophagy</keyword>
<keyword id="KW-0968">Cytoplasmic vesicle</keyword>
<keyword id="KW-0967">Endosome</keyword>
<keyword id="KW-0458">Lysosome</keyword>
<keyword id="KW-0472">Membrane</keyword>
<keyword id="KW-0479">Metal-binding</keyword>
<keyword id="KW-0597">Phosphoprotein</keyword>
<keyword id="KW-0653">Protein transport</keyword>
<keyword id="KW-1185">Reference proteome</keyword>
<keyword id="KW-0677">Repeat</keyword>
<keyword id="KW-0813">Transport</keyword>
<keyword id="KW-0862">Zinc</keyword>
<keyword id="KW-0863">Zinc-finger</keyword>
<dbReference type="EMBL" id="BC087058">
    <property type="protein sequence ID" value="AAH87058.1"/>
    <property type="molecule type" value="mRNA"/>
</dbReference>
<dbReference type="RefSeq" id="NP_001009677.1">
    <property type="nucleotide sequence ID" value="NM_001009677.3"/>
</dbReference>
<dbReference type="SMR" id="Q5PQS0"/>
<dbReference type="FunCoup" id="Q5PQS0">
    <property type="interactions" value="2238"/>
</dbReference>
<dbReference type="STRING" id="10116.ENSRNOP00000034752"/>
<dbReference type="iPTMnet" id="Q5PQS0"/>
<dbReference type="PhosphoSitePlus" id="Q5PQS0"/>
<dbReference type="PaxDb" id="10116-ENSRNOP00000034752"/>
<dbReference type="Ensembl" id="ENSRNOT00000037147.6">
    <property type="protein sequence ID" value="ENSRNOP00000034752.4"/>
    <property type="gene ID" value="ENSRNOG00000028521.6"/>
</dbReference>
<dbReference type="GeneID" id="303584"/>
<dbReference type="KEGG" id="rno:303584"/>
<dbReference type="UCSC" id="RGD:1308010">
    <property type="organism name" value="rat"/>
</dbReference>
<dbReference type="AGR" id="RGD:1308010"/>
<dbReference type="CTD" id="9842"/>
<dbReference type="RGD" id="1308010">
    <property type="gene designation" value="Plekhm1"/>
</dbReference>
<dbReference type="eggNOG" id="KOG1829">
    <property type="taxonomic scope" value="Eukaryota"/>
</dbReference>
<dbReference type="GeneTree" id="ENSGT00940000155111"/>
<dbReference type="HOGENOM" id="CLU_011318_0_0_1"/>
<dbReference type="InParanoid" id="Q5PQS0"/>
<dbReference type="OMA" id="IWRDYYC"/>
<dbReference type="OrthoDB" id="62364at2759"/>
<dbReference type="PhylomeDB" id="Q5PQS0"/>
<dbReference type="TreeFam" id="TF317067"/>
<dbReference type="PRO" id="PR:Q5PQS0"/>
<dbReference type="Proteomes" id="UP000002494">
    <property type="component" value="Chromosome 10"/>
</dbReference>
<dbReference type="Bgee" id="ENSRNOG00000028521">
    <property type="expression patterns" value="Expressed in duodenum and 18 other cell types or tissues"/>
</dbReference>
<dbReference type="GO" id="GO:0044754">
    <property type="term" value="C:autolysosome"/>
    <property type="evidence" value="ECO:0000250"/>
    <property type="project" value="UniProtKB"/>
</dbReference>
<dbReference type="GO" id="GO:0120281">
    <property type="term" value="C:autolysosome membrane"/>
    <property type="evidence" value="ECO:0007669"/>
    <property type="project" value="UniProtKB-SubCell"/>
</dbReference>
<dbReference type="GO" id="GO:0031902">
    <property type="term" value="C:late endosome membrane"/>
    <property type="evidence" value="ECO:0007669"/>
    <property type="project" value="UniProtKB-SubCell"/>
</dbReference>
<dbReference type="GO" id="GO:0005764">
    <property type="term" value="C:lysosome"/>
    <property type="evidence" value="ECO:0000250"/>
    <property type="project" value="UniProtKB"/>
</dbReference>
<dbReference type="GO" id="GO:0008270">
    <property type="term" value="F:zinc ion binding"/>
    <property type="evidence" value="ECO:0007669"/>
    <property type="project" value="UniProtKB-KW"/>
</dbReference>
<dbReference type="GO" id="GO:0061909">
    <property type="term" value="P:autophagosome-lysosome fusion"/>
    <property type="evidence" value="ECO:0000250"/>
    <property type="project" value="UniProtKB"/>
</dbReference>
<dbReference type="GO" id="GO:1902774">
    <property type="term" value="P:late endosome to lysosome transport"/>
    <property type="evidence" value="ECO:0000250"/>
    <property type="project" value="UniProtKB"/>
</dbReference>
<dbReference type="GO" id="GO:0032418">
    <property type="term" value="P:lysosome localization"/>
    <property type="evidence" value="ECO:0000250"/>
    <property type="project" value="UniProtKB"/>
</dbReference>
<dbReference type="GO" id="GO:0045780">
    <property type="term" value="P:positive regulation of bone resorption"/>
    <property type="evidence" value="ECO:0000250"/>
    <property type="project" value="UniProtKB"/>
</dbReference>
<dbReference type="GO" id="GO:1900029">
    <property type="term" value="P:positive regulation of ruffle assembly"/>
    <property type="evidence" value="ECO:0000250"/>
    <property type="project" value="UniProtKB"/>
</dbReference>
<dbReference type="GO" id="GO:0015031">
    <property type="term" value="P:protein transport"/>
    <property type="evidence" value="ECO:0007669"/>
    <property type="project" value="UniProtKB-KW"/>
</dbReference>
<dbReference type="CDD" id="cd13321">
    <property type="entry name" value="PH_PLEKHM1"/>
    <property type="match status" value="1"/>
</dbReference>
<dbReference type="CDD" id="cd17679">
    <property type="entry name" value="RUN_PLEKHM1"/>
    <property type="match status" value="1"/>
</dbReference>
<dbReference type="FunFam" id="1.20.58.900:FF:000013">
    <property type="entry name" value="pleckstrin homology domain-containing family M member 1 isoform X1"/>
    <property type="match status" value="1"/>
</dbReference>
<dbReference type="FunFam" id="2.30.29.30:FF:000315">
    <property type="entry name" value="pleckstrin homology domain-containing family M member 1 isoform X1"/>
    <property type="match status" value="1"/>
</dbReference>
<dbReference type="Gene3D" id="1.20.58.900">
    <property type="match status" value="1"/>
</dbReference>
<dbReference type="Gene3D" id="2.30.29.30">
    <property type="entry name" value="Pleckstrin-homology domain (PH domain)/Phosphotyrosine-binding domain (PTB)"/>
    <property type="match status" value="1"/>
</dbReference>
<dbReference type="InterPro" id="IPR051366">
    <property type="entry name" value="DEF8"/>
</dbReference>
<dbReference type="InterPro" id="IPR002219">
    <property type="entry name" value="PE/DAG-bd"/>
</dbReference>
<dbReference type="InterPro" id="IPR011993">
    <property type="entry name" value="PH-like_dom_sf"/>
</dbReference>
<dbReference type="InterPro" id="IPR001849">
    <property type="entry name" value="PH_domain"/>
</dbReference>
<dbReference type="InterPro" id="IPR042827">
    <property type="entry name" value="PLEKHM1_PH"/>
</dbReference>
<dbReference type="InterPro" id="IPR025258">
    <property type="entry name" value="RH_dom"/>
</dbReference>
<dbReference type="InterPro" id="IPR004012">
    <property type="entry name" value="Run_dom"/>
</dbReference>
<dbReference type="InterPro" id="IPR037213">
    <property type="entry name" value="Run_dom_sf"/>
</dbReference>
<dbReference type="InterPro" id="IPR047326">
    <property type="entry name" value="RUN_PLEKHM1"/>
</dbReference>
<dbReference type="PANTHER" id="PTHR12326">
    <property type="entry name" value="PLECKSTRIN HOMOLOGY DOMAIN CONTAINING PROTEIN"/>
    <property type="match status" value="1"/>
</dbReference>
<dbReference type="PANTHER" id="PTHR12326:SF5">
    <property type="entry name" value="PLECKSTRIN HOMOLOGY DOMAIN-CONTAINING FAMILY M MEMBER 1"/>
    <property type="match status" value="1"/>
</dbReference>
<dbReference type="Pfam" id="PF13901">
    <property type="entry name" value="RH_dom"/>
    <property type="match status" value="1"/>
</dbReference>
<dbReference type="Pfam" id="PF02759">
    <property type="entry name" value="RUN"/>
    <property type="match status" value="1"/>
</dbReference>
<dbReference type="SMART" id="SM00109">
    <property type="entry name" value="C1"/>
    <property type="match status" value="1"/>
</dbReference>
<dbReference type="SMART" id="SM01175">
    <property type="entry name" value="DUF4206"/>
    <property type="match status" value="1"/>
</dbReference>
<dbReference type="SMART" id="SM00233">
    <property type="entry name" value="PH"/>
    <property type="match status" value="2"/>
</dbReference>
<dbReference type="SMART" id="SM00593">
    <property type="entry name" value="RUN"/>
    <property type="match status" value="1"/>
</dbReference>
<dbReference type="SUPFAM" id="SSF50729">
    <property type="entry name" value="PH domain-like"/>
    <property type="match status" value="2"/>
</dbReference>
<dbReference type="SUPFAM" id="SSF140741">
    <property type="entry name" value="RUN domain-like"/>
    <property type="match status" value="1"/>
</dbReference>
<dbReference type="PROSITE" id="PS50003">
    <property type="entry name" value="PH_DOMAIN"/>
    <property type="match status" value="2"/>
</dbReference>
<dbReference type="PROSITE" id="PS50826">
    <property type="entry name" value="RUN"/>
    <property type="match status" value="1"/>
</dbReference>
<dbReference type="PROSITE" id="PS50081">
    <property type="entry name" value="ZF_DAG_PE_2"/>
    <property type="match status" value="1"/>
</dbReference>